<feature type="signal peptide" evidence="2">
    <location>
        <begin position="1"/>
        <end position="19"/>
    </location>
</feature>
<feature type="propeptide" id="PRO_0000392198" evidence="1">
    <location>
        <begin position="20"/>
        <end position="43"/>
    </location>
</feature>
<feature type="peptide" id="PRO_0000392199" description="Conotoxin Vt15.1">
    <location>
        <begin position="46"/>
        <end position="73"/>
    </location>
</feature>
<feature type="modified residue" description="Tryptophan amide" evidence="1">
    <location>
        <position position="73"/>
    </location>
</feature>
<comment type="subcellular location">
    <subcellularLocation>
        <location evidence="5">Secreted</location>
    </subcellularLocation>
</comment>
<comment type="tissue specificity">
    <text evidence="5">Expressed by the venom duct.</text>
</comment>
<comment type="domain">
    <text evidence="4">The cysteine framework is XV (C-C-CC-C-C-C-C).</text>
</comment>
<comment type="PTM">
    <text evidence="4">Contains 4 disulfide bonds.</text>
</comment>
<comment type="similarity">
    <text evidence="4">Belongs to the conotoxin V superfamily.</text>
</comment>
<comment type="caution">
    <text evidence="4">The status of C.vitulinus is unclear.</text>
</comment>
<organism>
    <name type="scientific">Conus planorbis</name>
    <name type="common">Planorbis cone</name>
    <dbReference type="NCBI Taxonomy" id="97183"/>
    <lineage>
        <taxon>Eukaryota</taxon>
        <taxon>Metazoa</taxon>
        <taxon>Spiralia</taxon>
        <taxon>Lophotrochozoa</taxon>
        <taxon>Mollusca</taxon>
        <taxon>Gastropoda</taxon>
        <taxon>Caenogastropoda</taxon>
        <taxon>Neogastropoda</taxon>
        <taxon>Conoidea</taxon>
        <taxon>Conidae</taxon>
        <taxon>Conus</taxon>
        <taxon>Strategoconus</taxon>
    </lineage>
</organism>
<accession>B3FIA6</accession>
<keyword id="KW-0027">Amidation</keyword>
<keyword id="KW-0165">Cleavage on pair of basic residues</keyword>
<keyword id="KW-1015">Disulfide bond</keyword>
<keyword id="KW-0964">Secreted</keyword>
<keyword id="KW-0732">Signal</keyword>
<keyword id="KW-0800">Toxin</keyword>
<protein>
    <recommendedName>
        <fullName evidence="3">Conotoxin Vt15.1</fullName>
    </recommendedName>
</protein>
<name>CVF1_CONPO</name>
<proteinExistence type="inferred from homology"/>
<evidence type="ECO:0000250" key="1"/>
<evidence type="ECO:0000255" key="2"/>
<evidence type="ECO:0000303" key="3">
    <source>
    </source>
</evidence>
<evidence type="ECO:0000305" key="4"/>
<evidence type="ECO:0000305" key="5">
    <source>
    </source>
</evidence>
<dbReference type="EMBL" id="EU169207">
    <property type="protein sequence ID" value="ABY26940.1"/>
    <property type="molecule type" value="mRNA"/>
</dbReference>
<dbReference type="SMR" id="B3FIA6"/>
<dbReference type="ConoServer" id="2787">
    <property type="toxin name" value="Vt15.1 precursor"/>
</dbReference>
<dbReference type="GO" id="GO:0005576">
    <property type="term" value="C:extracellular region"/>
    <property type="evidence" value="ECO:0007669"/>
    <property type="project" value="UniProtKB-SubCell"/>
</dbReference>
<dbReference type="GO" id="GO:0090729">
    <property type="term" value="F:toxin activity"/>
    <property type="evidence" value="ECO:0007669"/>
    <property type="project" value="UniProtKB-KW"/>
</dbReference>
<sequence length="75" mass="8298">MMPVILPLLLSLAIRGGDGQAIQGDRDLIAKLFKRYQEHGLSVKRACHTCDDGTECCDSRCSCPWNTCTCIPWGK</sequence>
<reference key="1">
    <citation type="journal article" date="2008" name="Peptides">
        <title>Identification of a novel class of conotoxins defined as V-conotoxins with a unique cysteine pattern and signal peptide sequence.</title>
        <authorList>
            <person name="Peng C."/>
            <person name="Liu L."/>
            <person name="Shao X.X."/>
            <person name="Chi C.-W."/>
            <person name="Wang C.G."/>
        </authorList>
    </citation>
    <scope>NUCLEOTIDE SEQUENCE [MRNA]</scope>
    <source>
        <strain>C.vitulinus</strain>
        <tissue>Venom duct</tissue>
    </source>
</reference>